<protein>
    <recommendedName>
        <fullName>Unconventional myosin-XVIIIb</fullName>
    </recommendedName>
</protein>
<accession>Q8IUG5</accession>
<accession>A0A075B6F5</accession>
<accession>B2RWP3</accession>
<accession>F5GXR6</accession>
<accession>F5GYU7</accession>
<accession>Q8NDI8</accession>
<accession>Q8TE65</accession>
<accession>Q8WWS0</accession>
<accession>Q96KH2</accession>
<accession>Q96KR8</accession>
<accession>Q96KR9</accession>
<proteinExistence type="evidence at protein level"/>
<dbReference type="EMBL" id="AB075376">
    <property type="protein sequence ID" value="BAC16363.1"/>
    <property type="molecule type" value="mRNA"/>
</dbReference>
<dbReference type="EMBL" id="AB042648">
    <property type="protein sequence ID" value="BAB55550.2"/>
    <property type="molecule type" value="mRNA"/>
</dbReference>
<dbReference type="EMBL" id="AJ310931">
    <property type="protein sequence ID" value="CAC70712.2"/>
    <property type="molecule type" value="mRNA"/>
</dbReference>
<dbReference type="EMBL" id="AJ310932">
    <property type="protein sequence ID" value="CAC70714.3"/>
    <property type="molecule type" value="Genomic_DNA"/>
</dbReference>
<dbReference type="EMBL" id="AY077700">
    <property type="protein sequence ID" value="AAL75811.1"/>
    <property type="molecule type" value="mRNA"/>
</dbReference>
<dbReference type="EMBL" id="Z98949">
    <property type="status" value="NOT_ANNOTATED_CDS"/>
    <property type="molecule type" value="Genomic_DNA"/>
</dbReference>
<dbReference type="EMBL" id="AL080245">
    <property type="status" value="NOT_ANNOTATED_CDS"/>
    <property type="molecule type" value="Genomic_DNA"/>
</dbReference>
<dbReference type="EMBL" id="AL022329">
    <property type="status" value="NOT_ANNOTATED_CDS"/>
    <property type="molecule type" value="Genomic_DNA"/>
</dbReference>
<dbReference type="EMBL" id="AL079300">
    <property type="status" value="NOT_ANNOTATED_CDS"/>
    <property type="molecule type" value="Genomic_DNA"/>
</dbReference>
<dbReference type="EMBL" id="KF457380">
    <property type="status" value="NOT_ANNOTATED_CDS"/>
    <property type="molecule type" value="Genomic_DNA"/>
</dbReference>
<dbReference type="EMBL" id="KF457381">
    <property type="status" value="NOT_ANNOTATED_CDS"/>
    <property type="molecule type" value="Genomic_DNA"/>
</dbReference>
<dbReference type="EMBL" id="KF457390">
    <property type="status" value="NOT_ANNOTATED_CDS"/>
    <property type="molecule type" value="Genomic_DNA"/>
</dbReference>
<dbReference type="EMBL" id="KF511427">
    <property type="status" value="NOT_ANNOTATED_CDS"/>
    <property type="molecule type" value="Genomic_DNA"/>
</dbReference>
<dbReference type="EMBL" id="BC144597">
    <property type="protein sequence ID" value="AAI44598.1"/>
    <property type="molecule type" value="mRNA"/>
</dbReference>
<dbReference type="EMBL" id="BC150626">
    <property type="protein sequence ID" value="AAI50627.1"/>
    <property type="molecule type" value="mRNA"/>
</dbReference>
<dbReference type="EMBL" id="AJ271918">
    <property type="protein sequence ID" value="CAC81082.1"/>
    <property type="molecule type" value="mRNA"/>
</dbReference>
<dbReference type="EMBL" id="AL833890">
    <property type="protein sequence ID" value="CAD38746.1"/>
    <property type="molecule type" value="mRNA"/>
</dbReference>
<dbReference type="CCDS" id="CCDS54507.1">
    <molecule id="Q8IUG5-1"/>
</dbReference>
<dbReference type="CCDS" id="CCDS82703.1">
    <molecule id="Q8IUG5-3"/>
</dbReference>
<dbReference type="RefSeq" id="NP_001305174.1">
    <molecule id="Q8IUG5-3"/>
    <property type="nucleotide sequence ID" value="NM_001318245.2"/>
</dbReference>
<dbReference type="RefSeq" id="NP_115997.5">
    <molecule id="Q8IUG5-1"/>
    <property type="nucleotide sequence ID" value="NM_032608.6"/>
</dbReference>
<dbReference type="SMR" id="Q8IUG5"/>
<dbReference type="BioGRID" id="124214">
    <property type="interactions" value="13"/>
</dbReference>
<dbReference type="FunCoup" id="Q8IUG5">
    <property type="interactions" value="217"/>
</dbReference>
<dbReference type="IntAct" id="Q8IUG5">
    <property type="interactions" value="9"/>
</dbReference>
<dbReference type="STRING" id="9606.ENSP00000386096"/>
<dbReference type="GlyGen" id="Q8IUG5">
    <property type="glycosylation" value="3 sites, 1 N-linked glycan (1 site), 1 O-linked glycan (1 site)"/>
</dbReference>
<dbReference type="iPTMnet" id="Q8IUG5"/>
<dbReference type="PhosphoSitePlus" id="Q8IUG5"/>
<dbReference type="BioMuta" id="MYO18B"/>
<dbReference type="DMDM" id="32699565"/>
<dbReference type="jPOST" id="Q8IUG5"/>
<dbReference type="MassIVE" id="Q8IUG5"/>
<dbReference type="PaxDb" id="9606-ENSP00000334563"/>
<dbReference type="PeptideAtlas" id="Q8IUG5"/>
<dbReference type="ProteomicsDB" id="24501"/>
<dbReference type="ProteomicsDB" id="24848"/>
<dbReference type="ProteomicsDB" id="70563">
    <molecule id="Q8IUG5-1"/>
</dbReference>
<dbReference type="ProteomicsDB" id="70564">
    <molecule id="Q8IUG5-2"/>
</dbReference>
<dbReference type="Pumba" id="Q8IUG5"/>
<dbReference type="Antibodypedia" id="264">
    <property type="antibodies" value="77 antibodies from 22 providers"/>
</dbReference>
<dbReference type="DNASU" id="84700"/>
<dbReference type="Ensembl" id="ENST00000335473.12">
    <molecule id="Q8IUG5-1"/>
    <property type="protein sequence ID" value="ENSP00000334563.8"/>
    <property type="gene ID" value="ENSG00000133454.16"/>
</dbReference>
<dbReference type="Ensembl" id="ENST00000407587.6">
    <molecule id="Q8IUG5-3"/>
    <property type="protein sequence ID" value="ENSP00000386096.2"/>
    <property type="gene ID" value="ENSG00000133454.16"/>
</dbReference>
<dbReference type="Ensembl" id="ENST00000536101.5">
    <molecule id="Q8IUG5-1"/>
    <property type="protein sequence ID" value="ENSP00000441229.1"/>
    <property type="gene ID" value="ENSG00000133454.16"/>
</dbReference>
<dbReference type="GeneID" id="84700"/>
<dbReference type="KEGG" id="hsa:84700"/>
<dbReference type="MANE-Select" id="ENST00000335473.12">
    <property type="protein sequence ID" value="ENSP00000334563.8"/>
    <property type="RefSeq nucleotide sequence ID" value="NM_032608.7"/>
    <property type="RefSeq protein sequence ID" value="NP_115997.5"/>
</dbReference>
<dbReference type="UCSC" id="uc003abz.1">
    <property type="organism name" value="human"/>
</dbReference>
<dbReference type="UCSC" id="uc062com.1">
    <molecule id="Q8IUG5-1"/>
    <property type="organism name" value="human"/>
</dbReference>
<dbReference type="AGR" id="HGNC:18150"/>
<dbReference type="CTD" id="84700"/>
<dbReference type="DisGeNET" id="84700"/>
<dbReference type="GeneCards" id="MYO18B"/>
<dbReference type="HGNC" id="HGNC:18150">
    <property type="gene designation" value="MYO18B"/>
</dbReference>
<dbReference type="HPA" id="ENSG00000133454">
    <property type="expression patterns" value="Tissue enhanced (heart muscle, skeletal muscle, tongue)"/>
</dbReference>
<dbReference type="MalaCards" id="MYO18B"/>
<dbReference type="MIM" id="607295">
    <property type="type" value="gene"/>
</dbReference>
<dbReference type="MIM" id="616549">
    <property type="type" value="phenotype"/>
</dbReference>
<dbReference type="neXtProt" id="NX_Q8IUG5"/>
<dbReference type="OpenTargets" id="ENSG00000133454"/>
<dbReference type="Orphanet" id="447974">
    <property type="disease" value="Klippel-Feil anomaly-myopathy-facial dysmorphism syndrome"/>
</dbReference>
<dbReference type="PharmGKB" id="PA38300"/>
<dbReference type="VEuPathDB" id="HostDB:ENSG00000133454"/>
<dbReference type="eggNOG" id="KOG0161">
    <property type="taxonomic scope" value="Eukaryota"/>
</dbReference>
<dbReference type="GeneTree" id="ENSGT00940000158067"/>
<dbReference type="HOGENOM" id="CLU_1326008_0_0_1"/>
<dbReference type="InParanoid" id="Q8IUG5"/>
<dbReference type="OMA" id="MLQAHKQ"/>
<dbReference type="OrthoDB" id="2505895at2759"/>
<dbReference type="PAN-GO" id="Q8IUG5">
    <property type="GO annotations" value="6 GO annotations based on evolutionary models"/>
</dbReference>
<dbReference type="PhylomeDB" id="Q8IUG5"/>
<dbReference type="TreeFam" id="TF339614"/>
<dbReference type="PathwayCommons" id="Q8IUG5"/>
<dbReference type="SignaLink" id="Q8IUG5"/>
<dbReference type="BioGRID-ORCS" id="84700">
    <property type="hits" value="12 hits in 1153 CRISPR screens"/>
</dbReference>
<dbReference type="ChiTaRS" id="MYO18B">
    <property type="organism name" value="human"/>
</dbReference>
<dbReference type="GeneWiki" id="MYO18B"/>
<dbReference type="GenomeRNAi" id="84700"/>
<dbReference type="Pharos" id="Q8IUG5">
    <property type="development level" value="Tbio"/>
</dbReference>
<dbReference type="PRO" id="PR:Q8IUG5"/>
<dbReference type="Proteomes" id="UP000005640">
    <property type="component" value="Chromosome 22"/>
</dbReference>
<dbReference type="RNAct" id="Q8IUG5">
    <property type="molecule type" value="protein"/>
</dbReference>
<dbReference type="Bgee" id="ENSG00000133454">
    <property type="expression patterns" value="Expressed in apex of heart and 100 other cell types or tissues"/>
</dbReference>
<dbReference type="ExpressionAtlas" id="Q8IUG5">
    <property type="expression patterns" value="baseline and differential"/>
</dbReference>
<dbReference type="GO" id="GO:0005737">
    <property type="term" value="C:cytoplasm"/>
    <property type="evidence" value="ECO:0000318"/>
    <property type="project" value="GO_Central"/>
</dbReference>
<dbReference type="GO" id="GO:0031941">
    <property type="term" value="C:filamentous actin"/>
    <property type="evidence" value="ECO:0007669"/>
    <property type="project" value="Ensembl"/>
</dbReference>
<dbReference type="GO" id="GO:0032982">
    <property type="term" value="C:myosin filament"/>
    <property type="evidence" value="ECO:0000318"/>
    <property type="project" value="GO_Central"/>
</dbReference>
<dbReference type="GO" id="GO:0016460">
    <property type="term" value="C:myosin II complex"/>
    <property type="evidence" value="ECO:0000318"/>
    <property type="project" value="GO_Central"/>
</dbReference>
<dbReference type="GO" id="GO:0005634">
    <property type="term" value="C:nucleus"/>
    <property type="evidence" value="ECO:0007669"/>
    <property type="project" value="UniProtKB-SubCell"/>
</dbReference>
<dbReference type="GO" id="GO:0016461">
    <property type="term" value="C:unconventional myosin complex"/>
    <property type="evidence" value="ECO:0000314"/>
    <property type="project" value="UniProtKB"/>
</dbReference>
<dbReference type="GO" id="GO:0030018">
    <property type="term" value="C:Z disc"/>
    <property type="evidence" value="ECO:0007669"/>
    <property type="project" value="Ensembl"/>
</dbReference>
<dbReference type="GO" id="GO:0051015">
    <property type="term" value="F:actin filament binding"/>
    <property type="evidence" value="ECO:0000318"/>
    <property type="project" value="GO_Central"/>
</dbReference>
<dbReference type="GO" id="GO:0005524">
    <property type="term" value="F:ATP binding"/>
    <property type="evidence" value="ECO:0007669"/>
    <property type="project" value="UniProtKB-KW"/>
</dbReference>
<dbReference type="GO" id="GO:0003774">
    <property type="term" value="F:cytoskeletal motor activity"/>
    <property type="evidence" value="ECO:0007669"/>
    <property type="project" value="InterPro"/>
</dbReference>
<dbReference type="GO" id="GO:0055013">
    <property type="term" value="P:cardiac muscle cell development"/>
    <property type="evidence" value="ECO:0007669"/>
    <property type="project" value="Ensembl"/>
</dbReference>
<dbReference type="GO" id="GO:0001701">
    <property type="term" value="P:in utero embryonic development"/>
    <property type="evidence" value="ECO:0007669"/>
    <property type="project" value="Ensembl"/>
</dbReference>
<dbReference type="GO" id="GO:0001570">
    <property type="term" value="P:vasculogenesis"/>
    <property type="evidence" value="ECO:0007669"/>
    <property type="project" value="Ensembl"/>
</dbReference>
<dbReference type="CDD" id="cd01386">
    <property type="entry name" value="MYSc_Myo18"/>
    <property type="match status" value="1"/>
</dbReference>
<dbReference type="FunFam" id="1.10.10.820:FF:000004">
    <property type="entry name" value="unconventional myosin-XVIIIa isoform X1"/>
    <property type="match status" value="1"/>
</dbReference>
<dbReference type="FunFam" id="1.20.58.530:FF:000011">
    <property type="entry name" value="unconventional myosin-XVIIIa isoform X2"/>
    <property type="match status" value="1"/>
</dbReference>
<dbReference type="Gene3D" id="1.10.10.820">
    <property type="match status" value="1"/>
</dbReference>
<dbReference type="Gene3D" id="1.20.58.530">
    <property type="match status" value="1"/>
</dbReference>
<dbReference type="Gene3D" id="6.20.240.20">
    <property type="match status" value="1"/>
</dbReference>
<dbReference type="Gene3D" id="3.40.850.10">
    <property type="entry name" value="Kinesin motor domain"/>
    <property type="match status" value="1"/>
</dbReference>
<dbReference type="Gene3D" id="1.20.120.720">
    <property type="entry name" value="Myosin VI head, motor domain, U50 subdomain"/>
    <property type="match status" value="1"/>
</dbReference>
<dbReference type="Gene3D" id="4.10.270.10">
    <property type="entry name" value="Myosin, subunit A"/>
    <property type="match status" value="1"/>
</dbReference>
<dbReference type="InterPro" id="IPR036961">
    <property type="entry name" value="Kinesin_motor_dom_sf"/>
</dbReference>
<dbReference type="InterPro" id="IPR001609">
    <property type="entry name" value="Myosin_head_motor_dom-like"/>
</dbReference>
<dbReference type="InterPro" id="IPR036064">
    <property type="entry name" value="MYSc_Myo18"/>
</dbReference>
<dbReference type="InterPro" id="IPR027417">
    <property type="entry name" value="P-loop_NTPase"/>
</dbReference>
<dbReference type="PANTHER" id="PTHR45615">
    <property type="entry name" value="MYOSIN HEAVY CHAIN, NON-MUSCLE"/>
    <property type="match status" value="1"/>
</dbReference>
<dbReference type="PANTHER" id="PTHR45615:SF8">
    <property type="entry name" value="UNCONVENTIONAL MYOSIN-XVIIIB"/>
    <property type="match status" value="1"/>
</dbReference>
<dbReference type="Pfam" id="PF00063">
    <property type="entry name" value="Myosin_head"/>
    <property type="match status" value="1"/>
</dbReference>
<dbReference type="PRINTS" id="PR00193">
    <property type="entry name" value="MYOSINHEAVY"/>
</dbReference>
<dbReference type="SMART" id="SM00242">
    <property type="entry name" value="MYSc"/>
    <property type="match status" value="1"/>
</dbReference>
<dbReference type="SUPFAM" id="SSF52540">
    <property type="entry name" value="P-loop containing nucleoside triphosphate hydrolases"/>
    <property type="match status" value="1"/>
</dbReference>
<dbReference type="PROSITE" id="PS50096">
    <property type="entry name" value="IQ"/>
    <property type="match status" value="1"/>
</dbReference>
<dbReference type="PROSITE" id="PS51456">
    <property type="entry name" value="MYOSIN_MOTOR"/>
    <property type="match status" value="1"/>
</dbReference>
<gene>
    <name type="primary">MYO18B</name>
</gene>
<evidence type="ECO:0000255" key="1"/>
<evidence type="ECO:0000255" key="2">
    <source>
        <dbReference type="PROSITE-ProRule" id="PRU00116"/>
    </source>
</evidence>
<evidence type="ECO:0000255" key="3">
    <source>
        <dbReference type="PROSITE-ProRule" id="PRU00782"/>
    </source>
</evidence>
<evidence type="ECO:0000256" key="4">
    <source>
        <dbReference type="SAM" id="MobiDB-lite"/>
    </source>
</evidence>
<evidence type="ECO:0000269" key="5">
    <source>
    </source>
</evidence>
<evidence type="ECO:0000269" key="6">
    <source>
    </source>
</evidence>
<evidence type="ECO:0000269" key="7">
    <source>
    </source>
</evidence>
<evidence type="ECO:0000269" key="8">
    <source>
    </source>
</evidence>
<evidence type="ECO:0000269" key="9">
    <source ref="3"/>
</evidence>
<evidence type="ECO:0000303" key="10">
    <source>
    </source>
</evidence>
<evidence type="ECO:0000305" key="11"/>
<evidence type="ECO:0007744" key="12">
    <source>
    </source>
</evidence>
<evidence type="ECO:0007744" key="13">
    <source>
    </source>
</evidence>
<sequence length="2567" mass="285215">MAISSRLALWEQKIREEDKSPPPSSPPPLFSVIPGGFIKQLVRGTEKEAKEARQRKQLAVASPEREIPEISISQPNSKSSSGTRSGSQQISQDDQSSSPGSSDILGKESEGSRSPDPEQMTSINGEKAQELGSSATPTKKTVPFKRGVRRGDVLLMVAKLDPDSAKPEKTHPHDAPPCKTSPPATDTGKEKKGETSRTPCGSQASTEILAPKAEKTRTGGLGDPGQGTVALKKGEEGQSIVGKGLGTPKTTELKEAEPQGKDRQGTRPQAQGPGEGVRPGKAEKEGAEPTNTVEKGNVSKDVGSEGKHVRPQIPGRKWGGFLGRRSKWDGPQNKKDKEGVLLSKAEKTGEPQTQMEKTSQVQGELGDDLRMGEKAGELRSTTGKAGESWDKKEKMGQPQGKSGNAGEARSQTEKGCEAPKEVSTMVESPAAPGKGGWPGSRGQEAEEPCSRAGDGAGALETELEGPSQPALEKDAERPRIRKENQDGPAPQEEGKGGQSRDSDQAPEDRWYEAEKVWLAQKDGFTLATVLKPDEGTADLPAGRVRLWIDADKTITEVDEEHVHRANPPELDQVEDLASLISVNESSVLNTLLQRYKAQLLHTCTGPDLIVLQPRGPSVPSAGKVPKGRRDGLPAHIGSMAQRAYWALLNQRRDQSIVALGWSGAGKTTCCEQVLEHLVGMAGSVDGRVSVEKIRATFTVLRAFGSVSMAHSRSATRFSMVMSLDFNATGRITAAQLQTMLLEKSRVARQPEGESNFLVFSQMLAGLDLDLRTELNLHQMADSSSFGMGVWSKPEDKQKAAAAFAQLQGAMEMLGISESEQRAVWRVLAAIYHLGAAGACKVGRKQFMRFEWANYAAEALGCEYEELNTATFKHHLRQIIQQMTFGPSRWGLEDEETSSGLKMTGVDCVEGMASGLYQELFAAVVSLINRSFSSHHLSMASIMVVDSPGFQNPRHQGKDRAATFEELCHNYAHERLQLLFYQRTFVSTLQRYQEEGVPVQFDLPDPSPGTTVAVVDQNPSQVRLPAGGGAQDARGLFWVLDEEVHVEGSSDSVVLERLCAAFEKKGAGTEGSSALRTCEQPLQCEIFHQLGWDPVRYDLTGWLHRAKPNLSALDAPQVLHQSKREELRSLFQARAKLPPVCRAVAGLEGTSQQALQRSRMVRRTFASSLAAVRRKAPCSQIKLQMDALTSMIKRSRLHFIHCLVPNPVVESRSGQESPPPPQPGRDKPGAGGPLALDIPALRVQLAGFHILEALRLHRTGYADHMGLTRFRRQFQVLDAPLLKKLMSTSEGIDERKAVEELLETLDLEKKAVAVGHSQVFLKAGVISRLEKQREKLVSQSIVLFQAACKGFLSRQEFKKLKIRRLAAQCIQKNVAVFLAVKDWPWWQLLGSLQPLLSATIGTEQLRAKEEELTTLRRKLEKSEKLRNELRQNTDLLESKIADLTSDLADERFKGDVACQVLESERAERLQAFREVQELKSKHEQVQKKLGDVNKQLEEAQQKIQLNDLERNPTGGADEWQMRFDCAQMENEFLRKRLQQCEERLDSELTARKELEQKLGELQSAYDGAKKMAHQLKRKCHHLTCDLEDTCVLLENQQSRNHELEKKQKKFDLQLAQALGESVFEKGLREKVTQENTSVRWELGQLQQQLKQKEQEASQLKQQVEMLQDHKRELLGSPSLGENCVAGLKERLWKLESSALEQQKIQSQQENTIKQLEQLRQRFELEIERMKQMHQKDREDQEEELEDVRQSCQKRLHQLEMQLEQEYEEKQMVLHEKQDLEGLIGTLCDQIGHRDFDVEKRLRRDLRRTHALLSDVQLLLGTMEDGKTSVSKEELEKVHSQLEQSEAKCEEALKTQKVLTADLESMHSELENMTRNKSLVDEQLYRLQFEKADLLKRIDEDQDDLNELMQKHKDLIAQSAADIGQIQELQLQLEEAKKEKHKLQEQLQVAQMRIEYLEQSTVDRAIVSRQEAVICDLENKTEFQKVQIKRFEVLVIRLRDSLIKMGEELSQAATSESQQRESSQYYQRRLEELKADMEELVQREAEASRRCMELEKYVEELAAVRQTLQTDLETSIRRIADLQAALEEVASSDSDTESVQTAVDCGSSGRKEMDNVSILSSQPEGSLQSWLSCTLSLATDTMRTPSRQSATSSRILSPRINEEAGDTERTQSALALSRARSTNVHSKTSGDKPVSPHFVRRQKYCHFGDGEVLAVQRKSTERLEPASSPLASRSTNTSPLSREKLPSPSAALSEFVEGLRRKRAQRGQGSTLGLEDWPTLPIYQTTGASTLRRGRAGSDEGNLSLRVGAKSPLEIEGAAGGLLRSTSLKCISSDGVGGTTLLPEKSKTQFSSCESLLESRPSMGRKLSSPTTPRDMLLSPTLRPRRRCLESSVDDAGCPDLGKEPLVFQNRQFAHLMEEPLGSDPFSWKLPSLDYERKTKVDFDDFLPAIRKPQTPTSLAGSAKGGQDGSQRSSIHFETEEANRSFLSGIKTILKKSPEPKEDPAHLSDSSSSSGSIVSFKSADSIKSRPGIPRLAGDGGERTSPERREPGTGRKDDDVASIMKKYLQK</sequence>
<feature type="chain" id="PRO_0000123478" description="Unconventional myosin-XVIIIb">
    <location>
        <begin position="1"/>
        <end position="2567"/>
    </location>
</feature>
<feature type="domain" description="Myosin motor" evidence="3">
    <location>
        <begin position="571"/>
        <end position="1333"/>
    </location>
</feature>
<feature type="domain" description="IQ" evidence="2">
    <location>
        <begin position="1336"/>
        <end position="1365"/>
    </location>
</feature>
<feature type="region of interest" description="Disordered" evidence="4">
    <location>
        <begin position="41"/>
        <end position="508"/>
    </location>
</feature>
<feature type="region of interest" description="Disordered" evidence="4">
    <location>
        <begin position="1208"/>
        <end position="1232"/>
    </location>
</feature>
<feature type="region of interest" description="GPA" evidence="1">
    <location>
        <begin position="1213"/>
        <end position="1240"/>
    </location>
</feature>
<feature type="region of interest" description="Tail">
    <location>
        <begin position="1426"/>
        <end position="2083"/>
    </location>
</feature>
<feature type="region of interest" description="Disordered" evidence="4">
    <location>
        <begin position="2139"/>
        <end position="2194"/>
    </location>
</feature>
<feature type="region of interest" description="Disordered" evidence="4">
    <location>
        <begin position="2217"/>
        <end position="2249"/>
    </location>
</feature>
<feature type="region of interest" description="Disordered" evidence="4">
    <location>
        <begin position="2357"/>
        <end position="2376"/>
    </location>
</feature>
<feature type="region of interest" description="Disordered" evidence="4">
    <location>
        <begin position="2444"/>
        <end position="2471"/>
    </location>
</feature>
<feature type="region of interest" description="Disordered" evidence="4">
    <location>
        <begin position="2494"/>
        <end position="2567"/>
    </location>
</feature>
<feature type="coiled-coil region" evidence="1">
    <location>
        <begin position="1396"/>
        <end position="1783"/>
    </location>
</feature>
<feature type="coiled-coil region" evidence="1">
    <location>
        <begin position="1825"/>
        <end position="1961"/>
    </location>
</feature>
<feature type="coiled-coil region" evidence="1">
    <location>
        <begin position="2014"/>
        <end position="2090"/>
    </location>
</feature>
<feature type="compositionally biased region" description="Basic and acidic residues" evidence="4">
    <location>
        <begin position="44"/>
        <end position="54"/>
    </location>
</feature>
<feature type="compositionally biased region" description="Low complexity" evidence="4">
    <location>
        <begin position="71"/>
        <end position="104"/>
    </location>
</feature>
<feature type="compositionally biased region" description="Basic and acidic residues" evidence="4">
    <location>
        <begin position="105"/>
        <end position="116"/>
    </location>
</feature>
<feature type="compositionally biased region" description="Basic and acidic residues" evidence="4">
    <location>
        <begin position="160"/>
        <end position="176"/>
    </location>
</feature>
<feature type="compositionally biased region" description="Polar residues" evidence="4">
    <location>
        <begin position="196"/>
        <end position="206"/>
    </location>
</feature>
<feature type="compositionally biased region" description="Basic and acidic residues" evidence="4">
    <location>
        <begin position="251"/>
        <end position="265"/>
    </location>
</feature>
<feature type="compositionally biased region" description="Basic and acidic residues" evidence="4">
    <location>
        <begin position="278"/>
        <end position="287"/>
    </location>
</feature>
<feature type="compositionally biased region" description="Basic and acidic residues" evidence="4">
    <location>
        <begin position="326"/>
        <end position="349"/>
    </location>
</feature>
<feature type="compositionally biased region" description="Polar residues" evidence="4">
    <location>
        <begin position="350"/>
        <end position="362"/>
    </location>
</feature>
<feature type="compositionally biased region" description="Basic and acidic residues" evidence="4">
    <location>
        <begin position="367"/>
        <end position="377"/>
    </location>
</feature>
<feature type="compositionally biased region" description="Basic and acidic residues" evidence="4">
    <location>
        <begin position="410"/>
        <end position="420"/>
    </location>
</feature>
<feature type="compositionally biased region" description="Basic and acidic residues" evidence="4">
    <location>
        <begin position="471"/>
        <end position="485"/>
    </location>
</feature>
<feature type="compositionally biased region" description="Basic and acidic residues" evidence="4">
    <location>
        <begin position="492"/>
        <end position="508"/>
    </location>
</feature>
<feature type="compositionally biased region" description="Polar residues" evidence="4">
    <location>
        <begin position="2139"/>
        <end position="2153"/>
    </location>
</feature>
<feature type="compositionally biased region" description="Basic and acidic residues" evidence="4">
    <location>
        <begin position="2158"/>
        <end position="2167"/>
    </location>
</feature>
<feature type="compositionally biased region" description="Polar residues" evidence="4">
    <location>
        <begin position="2168"/>
        <end position="2185"/>
    </location>
</feature>
<feature type="compositionally biased region" description="Polar residues" evidence="4">
    <location>
        <begin position="2227"/>
        <end position="2238"/>
    </location>
</feature>
<feature type="compositionally biased region" description="Basic and acidic residues" evidence="4">
    <location>
        <begin position="2494"/>
        <end position="2504"/>
    </location>
</feature>
<feature type="compositionally biased region" description="Low complexity" evidence="4">
    <location>
        <begin position="2506"/>
        <end position="2520"/>
    </location>
</feature>
<feature type="compositionally biased region" description="Basic and acidic residues" evidence="4">
    <location>
        <begin position="2537"/>
        <end position="2556"/>
    </location>
</feature>
<feature type="binding site" evidence="1">
    <location>
        <begin position="660"/>
        <end position="667"/>
    </location>
    <ligand>
        <name>ATP</name>
        <dbReference type="ChEBI" id="CHEBI:30616"/>
    </ligand>
</feature>
<feature type="modified residue" description="Phosphoserine" evidence="13">
    <location>
        <position position="1216"/>
    </location>
</feature>
<feature type="modified residue" description="Phosphoserine" evidence="12">
    <location>
        <position position="1829"/>
    </location>
</feature>
<feature type="modified residue" description="Phosphoserine" evidence="13">
    <location>
        <position position="2193"/>
    </location>
</feature>
<feature type="modified residue" description="Phosphoserine" evidence="13">
    <location>
        <position position="2296"/>
    </location>
</feature>
<feature type="modified residue" description="Phosphoserine" evidence="13">
    <location>
        <position position="2309"/>
    </location>
</feature>
<feature type="modified residue" description="Phosphoserine" evidence="13">
    <location>
        <position position="2377"/>
    </location>
</feature>
<feature type="splice variant" id="VSP_007764" description="In isoform 2." evidence="10">
    <location>
        <begin position="1"/>
        <end position="487"/>
    </location>
</feature>
<feature type="splice variant" id="VSP_007765" description="In isoform 2." evidence="10">
    <original>PAPQEEGKGGQSRDSD</original>
    <variation>MGSGAICWFNLRDVGS</variation>
    <location>
        <begin position="488"/>
        <end position="503"/>
    </location>
</feature>
<feature type="splice variant" id="VSP_059434" description="In isoform 3." evidence="11">
    <original>S</original>
    <variation>SQ</variation>
    <location>
        <position position="1019"/>
    </location>
</feature>
<feature type="sequence variant" id="VAR_056190" description="In dbSNP:rs133885.">
    <original>G</original>
    <variation>E</variation>
    <location>
        <position position="44"/>
    </location>
</feature>
<feature type="sequence variant" id="VAR_056191" description="In dbSNP:rs13058434.">
    <original>P</original>
    <variation>L</variation>
    <location>
        <position position="177"/>
    </location>
</feature>
<feature type="sequence variant" id="VAR_015862" description="In a lung small cell carcinoma sample; somatic mutation." evidence="5">
    <original>G</original>
    <variation>V</variation>
    <location>
        <position position="234"/>
    </location>
</feature>
<feature type="sequence variant" id="VAR_015863" description="In a lung small cell carcinoma sample; somatic mutation." evidence="5">
    <original>K</original>
    <variation>N</variation>
    <location>
        <position position="347"/>
    </location>
</feature>
<feature type="sequence variant" id="VAR_015864" description="In a lung small cell carcinoma sample; somatic mutation; dbSNP:rs750078923." evidence="5">
    <original>R</original>
    <variation>Q</variation>
    <location>
        <position position="379"/>
    </location>
</feature>
<feature type="sequence variant" id="VAR_015865" description="In a lung adenocarcinoma sample; somatic mutation." evidence="5">
    <original>W</original>
    <variation>C</variation>
    <location>
        <position position="389"/>
    </location>
</feature>
<feature type="sequence variant" id="VAR_056192" description="In dbSNP:rs3859866." evidence="7 9">
    <original>W</original>
    <variation>C</variation>
    <location>
        <position position="547"/>
    </location>
</feature>
<feature type="sequence variant" id="VAR_015866" description="In a lung large cell carcinoma sample; somatic mutation; dbSNP:rs370187232." evidence="5">
    <original>T</original>
    <variation>M</variation>
    <location>
        <position position="590"/>
    </location>
</feature>
<feature type="sequence variant" id="VAR_015867" description="In dbSNP:rs5761170." evidence="6 7 9">
    <original>W</original>
    <variation>R</variation>
    <location>
        <position position="661"/>
    </location>
</feature>
<feature type="sequence variant" id="VAR_015868" description="In a lung squamous cell carcinoma sample; somatic mutation." evidence="5">
    <original>A</original>
    <variation>G</variation>
    <location>
        <position position="835"/>
    </location>
</feature>
<feature type="sequence variant" id="VAR_056193" description="In dbSNP:rs9624909." evidence="6">
    <original>S</original>
    <variation>L</variation>
    <location>
        <position position="925"/>
    </location>
</feature>
<feature type="sequence variant" id="VAR_056194" description="In dbSNP:rs17704912.">
    <original>W</original>
    <variation>S</variation>
    <location>
        <position position="1037"/>
    </location>
</feature>
<feature type="sequence variant" id="VAR_015869" description="In a lung adenocarcinoma sample; somatic mutation." evidence="5">
    <original>R</original>
    <variation>L</variation>
    <location>
        <position position="1095"/>
    </location>
</feature>
<feature type="sequence variant" id="VAR_056195" description="In dbSNP:rs5761268." evidence="7 9">
    <original>H</original>
    <variation>Q</variation>
    <location>
        <position position="1119"/>
    </location>
</feature>
<feature type="sequence variant" id="VAR_015870" description="In a lung small cell carcinoma sample; somatic mutation; dbSNP:rs1429133479." evidence="5">
    <original>R</original>
    <variation>Q</variation>
    <location>
        <position position="1195"/>
    </location>
</feature>
<feature type="sequence variant" id="VAR_015871" description="In a lung large cell carcinoma sample; somatic mutation." evidence="5">
    <original>P</original>
    <variation>Q</variation>
    <location>
        <position position="1238"/>
    </location>
</feature>
<feature type="sequence variant" id="VAR_015872" description="In a lung adenocarcinoma sample; somatic mutation." evidence="5">
    <original>P</original>
    <variation>T</variation>
    <location>
        <position position="1238"/>
    </location>
</feature>
<feature type="sequence variant" id="VAR_056196" description="In dbSNP:rs35578357.">
    <original>S</original>
    <variation>F</variation>
    <location>
        <position position="1390"/>
    </location>
</feature>
<feature type="sequence variant" id="VAR_056197" description="In dbSNP:rs695633.">
    <original>I</original>
    <variation>V</variation>
    <location>
        <position position="1399"/>
    </location>
</feature>
<feature type="sequence variant" id="VAR_056198" description="In dbSNP:rs33928909.">
    <original>S</original>
    <variation>T</variation>
    <location>
        <position position="1444"/>
    </location>
</feature>
<feature type="sequence variant" id="VAR_015873" description="In a lung adenocarcinoma sample; somatic mutation." evidence="5">
    <original>E</original>
    <variation>K</variation>
    <location>
        <position position="1708"/>
    </location>
</feature>
<feature type="sequence variant" id="VAR_015874" description="In a lung adenocarcinoma sample; somatic mutation." evidence="5">
    <original>E</original>
    <variation>D</variation>
    <location>
        <position position="1715"/>
    </location>
</feature>
<feature type="sequence variant" id="VAR_015875" description="In a lung small cell carcinoma sample; somatic mutation." evidence="5">
    <original>A</original>
    <variation>E</variation>
    <location>
        <position position="1970"/>
    </location>
</feature>
<feature type="sequence variant" id="VAR_056199" description="In dbSNP:rs35370367.">
    <original>A</original>
    <variation>D</variation>
    <location>
        <position position="2294"/>
    </location>
</feature>
<feature type="sequence variant" id="VAR_015876" description="In a lung small cell carcinoma sample; somatic mutation." evidence="5">
    <original>G</original>
    <variation>C</variation>
    <location>
        <position position="2295"/>
    </location>
</feature>
<feature type="sequence variant" id="VAR_015877" description="In dbSNP:rs2236005." evidence="7">
    <original>Q</original>
    <variation>R</variation>
    <location>
        <position position="2347"/>
    </location>
</feature>
<feature type="sequence variant" id="VAR_015878" description="In a lung adenocarcinoma sample; somatic mutation; dbSNP:rs200567905." evidence="5">
    <original>R</original>
    <variation>H</variation>
    <location>
        <position position="2381"/>
    </location>
</feature>
<feature type="sequence variant" id="VAR_056200" description="In dbSNP:rs6004901.">
    <original>G</original>
    <variation>A</variation>
    <location>
        <position position="2395"/>
    </location>
</feature>
<feature type="sequence variant" id="VAR_056201" description="In dbSNP:rs7284177.">
    <original>G</original>
    <variation>S</variation>
    <location>
        <position position="2513"/>
    </location>
</feature>
<feature type="sequence variant" id="VAR_056202" description="In dbSNP:rs34875296.">
    <original>R</original>
    <variation>Q</variation>
    <location>
        <position position="2532"/>
    </location>
</feature>
<feature type="sequence variant" id="VAR_015879" description="In a lung large cell carcinoma sample; somatic mutation; dbSNP:rs780180192." evidence="5">
    <original>D</original>
    <variation>E</variation>
    <location>
        <position position="2554"/>
    </location>
</feature>
<feature type="sequence conflict" description="In Ref. 2; CAC70712." evidence="11" ref="2">
    <original>I</original>
    <variation>M</variation>
    <location>
        <position position="3"/>
    </location>
</feature>
<feature type="sequence conflict" description="In Ref. 6; AAI50627/AAI44598." evidence="11" ref="6">
    <original>A</original>
    <variation>T</variation>
    <location>
        <position position="828"/>
    </location>
</feature>
<feature type="sequence conflict" description="In Ref. 3; AAL75811." evidence="11" ref="3">
    <original>Q</original>
    <variation>QQ</variation>
    <location>
        <position position="1020"/>
    </location>
</feature>
<feature type="sequence conflict" description="In Ref. 3; AAL75811." evidence="11" ref="3">
    <original>A</original>
    <variation>T</variation>
    <location>
        <position position="1060"/>
    </location>
</feature>
<feature type="sequence conflict" description="In Ref. 3; AAL75811." evidence="11" ref="3">
    <original>N</original>
    <variation>D</variation>
    <location>
        <position position="1510"/>
    </location>
</feature>
<feature type="sequence conflict" description="In Ref. 6; AAI50627/AAI44598." evidence="11" ref="6">
    <location>
        <position position="1515"/>
    </location>
</feature>
<feature type="sequence conflict" description="In Ref. 5." evidence="11" ref="5">
    <original>KS</original>
    <variation>LT</variation>
    <location>
        <begin position="2343"/>
        <end position="2344"/>
    </location>
</feature>
<keyword id="KW-0009">Actin-binding</keyword>
<keyword id="KW-0025">Alternative splicing</keyword>
<keyword id="KW-0067">ATP-binding</keyword>
<keyword id="KW-0175">Coiled coil</keyword>
<keyword id="KW-0963">Cytoplasm</keyword>
<keyword id="KW-0505">Motor protein</keyword>
<keyword id="KW-0518">Myosin</keyword>
<keyword id="KW-0547">Nucleotide-binding</keyword>
<keyword id="KW-0539">Nucleus</keyword>
<keyword id="KW-0597">Phosphoprotein</keyword>
<keyword id="KW-1267">Proteomics identification</keyword>
<keyword id="KW-1185">Reference proteome</keyword>
<comment type="function">
    <text>May be involved in intracellular trafficking of the muscle cell when in the cytoplasm, whereas entering the nucleus, may be involved in the regulation of muscle specific genes. May play a role in the control of tumor development and progression; restored MYO18B expression in lung cancer cells suppresses anchorage-independent growth.</text>
</comment>
<comment type="subunit">
    <text>Homodimer. May interact with F actin through the GPA motif (Gly/Pro/Ala-rich).</text>
</comment>
<comment type="subcellular location">
    <subcellularLocation>
        <location>Cytoplasm</location>
    </subcellularLocation>
    <subcellularLocation>
        <location>Nucleus</location>
    </subcellularLocation>
    <subcellularLocation>
        <location>Cytoplasm</location>
        <location>Myofibril</location>
        <location>Sarcomere</location>
    </subcellularLocation>
    <text>Punctate pattern in undifferentiated myoblasts. Nuclear, on primary cardiomyocytes and adult muscle. A partial sarcomeric location was found in some cardiomyocytes.</text>
</comment>
<comment type="alternative products">
    <event type="alternative splicing"/>
    <isoform>
        <id>Q8IUG5-1</id>
        <name>1</name>
        <sequence type="displayed"/>
    </isoform>
    <isoform>
        <id>Q8IUG5-2</id>
        <name>2</name>
        <sequence type="described" ref="VSP_007764 VSP_007765"/>
    </isoform>
    <isoform>
        <id>Q8IUG5-3</id>
        <name>3</name>
        <sequence type="described" ref="VSP_059434"/>
    </isoform>
</comment>
<comment type="tissue specificity">
    <text>Selectively expressed in cardiac and skeletal muscles. Weakly expressed in testis, pancreas, placenta, prostate, lung and thymus.</text>
</comment>
<comment type="developmental stage">
    <text>Reaches an expression peak in the third day after induction and remains at similar level during successive myotubule maturation.</text>
</comment>
<comment type="disease" evidence="8">
    <disease id="DI-04523">
        <name>Klippel-Feil syndrome 4, autosomal recessive, with nemaline myopathy and facial dysmorphism</name>
        <acronym>KFS4</acronym>
        <description>A form of Klippel-Feil syndrome, a skeletal disorder characterized by congenital fusion of cervical vertebrae. It is due to a failure in the normal segmentation of vertebrae during the early weeks of fetal development. The clinical triad consists of short neck, low posterior hairline, and limited neck movement. KFS4 features additionally include myopathy, mild short stature, microcephaly, and distinctive facies.</description>
        <dbReference type="MIM" id="616549"/>
    </disease>
    <text>The disease is caused by variants affecting the gene represented in this entry.</text>
</comment>
<comment type="miscellaneous">
    <text>Frequently deleted, mutated, and hypermethylated in lung cancers.</text>
</comment>
<comment type="similarity">
    <text evidence="11">Belongs to the TRAFAC class myosin-kinesin ATPase superfamily. Myosin family.</text>
</comment>
<reference key="1">
    <citation type="journal article" date="2002" name="Proc. Natl. Acad. Sci. U.S.A.">
        <title>MYO18B, a candidate tumor suppressor gene at chromosome 22q12.1, deleted, mutated, and methylated in human lung cancer.</title>
        <authorList>
            <person name="Nishioka M."/>
            <person name="Kohno T."/>
            <person name="Tani M."/>
            <person name="Yanaihara N."/>
            <person name="Tomizawa Y."/>
            <person name="Otsuka A."/>
            <person name="Sasaki S."/>
            <person name="Kobayashi K."/>
            <person name="Niki T."/>
            <person name="Maeshima A."/>
            <person name="Sekido Y."/>
            <person name="Minna J.D."/>
            <person name="Sone S."/>
            <person name="Yokota J."/>
        </authorList>
    </citation>
    <scope>NUCLEOTIDE SEQUENCE [GENOMIC DNA / MRNA] (ISOFORMS 1 AND 2)</scope>
    <scope>VARIANTS VAL-234; ASN-347; GLN-379; CYS-389; MET-590; GLY-835; LEU-1095; GLN-1195; GLN-1238; THR-1238; LYS-1708; ASP-1715; GLU-1970; CYS-2295; HIS-2381 AND GLU-2554</scope>
    <scope>POSSIBLE ROLE IN TUMOR SUPPRESSION</scope>
    <source>
        <tissue>Skeletal muscle</tissue>
    </source>
</reference>
<reference key="2">
    <citation type="journal article" date="2003" name="J. Mol. Biol.">
        <title>Human MYO18B, a novel unconventional myosin heavy chain expressed in striated muscles moves into the myonuclei upon differentiation.</title>
        <authorList>
            <person name="Salamon M."/>
            <person name="Millino C."/>
            <person name="Raffaello A."/>
            <person name="Mongillo M."/>
            <person name="Sandri C."/>
            <person name="Bean C."/>
            <person name="Negrisolo E."/>
            <person name="Pallavicini A."/>
            <person name="Valle G."/>
            <person name="Zaccolo M."/>
            <person name="Schiaffino S."/>
            <person name="Lanfranchi G."/>
        </authorList>
    </citation>
    <scope>NUCLEOTIDE SEQUENCE [GENOMIC DNA / MRNA] (ISOFORM 1)</scope>
    <scope>CHARACTERIZATION</scope>
    <scope>VARIANTS ARG-661 AND LEU-925</scope>
    <source>
        <tissue>Skeletal muscle</tissue>
    </source>
</reference>
<reference key="3">
    <citation type="submission" date="2002-01" db="EMBL/GenBank/DDBJ databases">
        <title>Myosin-like gene expressed in human heart and muscle.</title>
        <authorList>
            <person name="Gu Y."/>
            <person name="Ji Y."/>
            <person name="Penn S.G."/>
            <person name="Hanzel D.K."/>
            <person name="Rank D.R."/>
            <person name="Chen W."/>
            <person name="Shannon M.E."/>
        </authorList>
    </citation>
    <scope>NUCLEOTIDE SEQUENCE [MRNA] (ISOFORM 1)</scope>
    <scope>VARIANTS CYS-547; ARG-661 AND GLN-1119</scope>
</reference>
<reference key="4">
    <citation type="journal article" date="1999" name="Nature">
        <title>The DNA sequence of human chromosome 22.</title>
        <authorList>
            <person name="Dunham I."/>
            <person name="Hunt A.R."/>
            <person name="Collins J.E."/>
            <person name="Bruskiewich R."/>
            <person name="Beare D.M."/>
            <person name="Clamp M."/>
            <person name="Smink L.J."/>
            <person name="Ainscough R."/>
            <person name="Almeida J.P."/>
            <person name="Babbage A.K."/>
            <person name="Bagguley C."/>
            <person name="Bailey J."/>
            <person name="Barlow K.F."/>
            <person name="Bates K.N."/>
            <person name="Beasley O.P."/>
            <person name="Bird C.P."/>
            <person name="Blakey S.E."/>
            <person name="Bridgeman A.M."/>
            <person name="Buck D."/>
            <person name="Burgess J."/>
            <person name="Burrill W.D."/>
            <person name="Burton J."/>
            <person name="Carder C."/>
            <person name="Carter N.P."/>
            <person name="Chen Y."/>
            <person name="Clark G."/>
            <person name="Clegg S.M."/>
            <person name="Cobley V.E."/>
            <person name="Cole C.G."/>
            <person name="Collier R.E."/>
            <person name="Connor R."/>
            <person name="Conroy D."/>
            <person name="Corby N.R."/>
            <person name="Coville G.J."/>
            <person name="Cox A.V."/>
            <person name="Davis J."/>
            <person name="Dawson E."/>
            <person name="Dhami P.D."/>
            <person name="Dockree C."/>
            <person name="Dodsworth S.J."/>
            <person name="Durbin R.M."/>
            <person name="Ellington A.G."/>
            <person name="Evans K.L."/>
            <person name="Fey J.M."/>
            <person name="Fleming K."/>
            <person name="French L."/>
            <person name="Garner A.A."/>
            <person name="Gilbert J.G.R."/>
            <person name="Goward M.E."/>
            <person name="Grafham D.V."/>
            <person name="Griffiths M.N.D."/>
            <person name="Hall C."/>
            <person name="Hall R.E."/>
            <person name="Hall-Tamlyn G."/>
            <person name="Heathcott R.W."/>
            <person name="Ho S."/>
            <person name="Holmes S."/>
            <person name="Hunt S.E."/>
            <person name="Jones M.C."/>
            <person name="Kershaw J."/>
            <person name="Kimberley A.M."/>
            <person name="King A."/>
            <person name="Laird G.K."/>
            <person name="Langford C.F."/>
            <person name="Leversha M.A."/>
            <person name="Lloyd C."/>
            <person name="Lloyd D.M."/>
            <person name="Martyn I.D."/>
            <person name="Mashreghi-Mohammadi M."/>
            <person name="Matthews L.H."/>
            <person name="Mccann O.T."/>
            <person name="Mcclay J."/>
            <person name="Mclaren S."/>
            <person name="McMurray A.A."/>
            <person name="Milne S.A."/>
            <person name="Mortimore B.J."/>
            <person name="Odell C.N."/>
            <person name="Pavitt R."/>
            <person name="Pearce A.V."/>
            <person name="Pearson D."/>
            <person name="Phillimore B.J.C.T."/>
            <person name="Phillips S.H."/>
            <person name="Plumb R.W."/>
            <person name="Ramsay H."/>
            <person name="Ramsey Y."/>
            <person name="Rogers L."/>
            <person name="Ross M.T."/>
            <person name="Scott C.E."/>
            <person name="Sehra H.K."/>
            <person name="Skuce C.D."/>
            <person name="Smalley S."/>
            <person name="Smith M.L."/>
            <person name="Soderlund C."/>
            <person name="Spragon L."/>
            <person name="Steward C.A."/>
            <person name="Sulston J.E."/>
            <person name="Swann R.M."/>
            <person name="Vaudin M."/>
            <person name="Wall M."/>
            <person name="Wallis J.M."/>
            <person name="Whiteley M.N."/>
            <person name="Willey D.L."/>
            <person name="Williams L."/>
            <person name="Williams S.A."/>
            <person name="Williamson H."/>
            <person name="Wilmer T.E."/>
            <person name="Wilming L."/>
            <person name="Wright C.L."/>
            <person name="Hubbard T."/>
            <person name="Bentley D.R."/>
            <person name="Beck S."/>
            <person name="Rogers J."/>
            <person name="Shimizu N."/>
            <person name="Minoshima S."/>
            <person name="Kawasaki K."/>
            <person name="Sasaki T."/>
            <person name="Asakawa S."/>
            <person name="Kudoh J."/>
            <person name="Shintani A."/>
            <person name="Shibuya K."/>
            <person name="Yoshizaki Y."/>
            <person name="Aoki N."/>
            <person name="Mitsuyama S."/>
            <person name="Roe B.A."/>
            <person name="Chen F."/>
            <person name="Chu L."/>
            <person name="Crabtree J."/>
            <person name="Deschamps S."/>
            <person name="Do A."/>
            <person name="Do T."/>
            <person name="Dorman A."/>
            <person name="Fang F."/>
            <person name="Fu Y."/>
            <person name="Hu P."/>
            <person name="Hua A."/>
            <person name="Kenton S."/>
            <person name="Lai H."/>
            <person name="Lao H.I."/>
            <person name="Lewis J."/>
            <person name="Lewis S."/>
            <person name="Lin S.-P."/>
            <person name="Loh P."/>
            <person name="Malaj E."/>
            <person name="Nguyen T."/>
            <person name="Pan H."/>
            <person name="Phan S."/>
            <person name="Qi S."/>
            <person name="Qian Y."/>
            <person name="Ray L."/>
            <person name="Ren Q."/>
            <person name="Shaull S."/>
            <person name="Sloan D."/>
            <person name="Song L."/>
            <person name="Wang Q."/>
            <person name="Wang Y."/>
            <person name="Wang Z."/>
            <person name="White J."/>
            <person name="Willingham D."/>
            <person name="Wu H."/>
            <person name="Yao Z."/>
            <person name="Zhan M."/>
            <person name="Zhang G."/>
            <person name="Chissoe S."/>
            <person name="Murray J."/>
            <person name="Miller N."/>
            <person name="Minx P."/>
            <person name="Fulton R."/>
            <person name="Johnson D."/>
            <person name="Bemis G."/>
            <person name="Bentley D."/>
            <person name="Bradshaw H."/>
            <person name="Bourne S."/>
            <person name="Cordes M."/>
            <person name="Du Z."/>
            <person name="Fulton L."/>
            <person name="Goela D."/>
            <person name="Graves T."/>
            <person name="Hawkins J."/>
            <person name="Hinds K."/>
            <person name="Kemp K."/>
            <person name="Latreille P."/>
            <person name="Layman D."/>
            <person name="Ozersky P."/>
            <person name="Rohlfing T."/>
            <person name="Scheet P."/>
            <person name="Walker C."/>
            <person name="Wamsley A."/>
            <person name="Wohldmann P."/>
            <person name="Pepin K."/>
            <person name="Nelson J."/>
            <person name="Korf I."/>
            <person name="Bedell J.A."/>
            <person name="Hillier L.W."/>
            <person name="Mardis E."/>
            <person name="Waterston R."/>
            <person name="Wilson R."/>
            <person name="Emanuel B.S."/>
            <person name="Shaikh T."/>
            <person name="Kurahashi H."/>
            <person name="Saitta S."/>
            <person name="Budarf M.L."/>
            <person name="McDermid H.E."/>
            <person name="Johnson A."/>
            <person name="Wong A.C.C."/>
            <person name="Morrow B.E."/>
            <person name="Edelmann L."/>
            <person name="Kim U.J."/>
            <person name="Shizuya H."/>
            <person name="Simon M.I."/>
            <person name="Dumanski J.P."/>
            <person name="Peyrard M."/>
            <person name="Kedra D."/>
            <person name="Seroussi E."/>
            <person name="Fransson I."/>
            <person name="Tapia I."/>
            <person name="Bruder C.E."/>
            <person name="O'Brien K.P."/>
            <person name="Wilkinson P."/>
            <person name="Bodenteich A."/>
            <person name="Hartman K."/>
            <person name="Hu X."/>
            <person name="Khan A.S."/>
            <person name="Lane L."/>
            <person name="Tilahun Y."/>
            <person name="Wright H."/>
        </authorList>
    </citation>
    <scope>NUCLEOTIDE SEQUENCE [LARGE SCALE GENOMIC DNA]</scope>
</reference>
<reference key="5">
    <citation type="submission" date="2000-02" db="EMBL/GenBank/DDBJ databases">
        <title>Full-length sequencing of 100 cDNA clones from human adult skeletal muscle.</title>
        <authorList>
            <person name="Stanchi F."/>
            <person name="Lanfranchi G."/>
        </authorList>
    </citation>
    <scope>NUCLEOTIDE SEQUENCE [MRNA] OF 2343-2567</scope>
    <source>
        <tissue>Skeletal muscle</tissue>
    </source>
</reference>
<reference key="6">
    <citation type="journal article" date="2004" name="Genome Res.">
        <title>The status, quality, and expansion of the NIH full-length cDNA project: the Mammalian Gene Collection (MGC).</title>
        <authorList>
            <consortium name="The MGC Project Team"/>
        </authorList>
    </citation>
    <scope>NUCLEOTIDE SEQUENCE [LARGE SCALE MRNA] (ISOFORM 1)</scope>
    <scope>VARIANTS CYS-547; ARG-661; GLN-1119 AND ARG-2347</scope>
</reference>
<reference key="7">
    <citation type="journal article" date="2007" name="BMC Genomics">
        <title>The full-ORF clone resource of the German cDNA consortium.</title>
        <authorList>
            <person name="Bechtel S."/>
            <person name="Rosenfelder H."/>
            <person name="Duda A."/>
            <person name="Schmidt C.P."/>
            <person name="Ernst U."/>
            <person name="Wellenreuther R."/>
            <person name="Mehrle A."/>
            <person name="Schuster C."/>
            <person name="Bahr A."/>
            <person name="Bloecker H."/>
            <person name="Heubner D."/>
            <person name="Hoerlein A."/>
            <person name="Michel G."/>
            <person name="Wedler H."/>
            <person name="Koehrer K."/>
            <person name="Ottenwaelder B."/>
            <person name="Poustka A."/>
            <person name="Wiemann S."/>
            <person name="Schupp I."/>
        </authorList>
    </citation>
    <scope>NUCLEOTIDE SEQUENCE [LARGE SCALE MRNA] OF 2359-2567</scope>
    <source>
        <tissue>Testis</tissue>
    </source>
</reference>
<reference key="8">
    <citation type="journal article" date="2003" name="Clin. Exp. Metastasis">
        <title>Genetic alterations responsible for metastatic phenotypes of lung cancer cells.</title>
        <authorList>
            <person name="Yokota J."/>
            <person name="Nishioka M."/>
            <person name="Tani M."/>
            <person name="Kohno T."/>
        </authorList>
    </citation>
    <scope>POSSIBLE INVOLVEMENT IN SUPPRESSION OF CELL ANCHORAGE-INDEPENDENT GROWTH</scope>
</reference>
<reference key="9">
    <citation type="journal article" date="2003" name="Nature">
        <title>Proteomic characterization of the human centrosome by protein correlation profiling.</title>
        <authorList>
            <person name="Andersen J.S."/>
            <person name="Wilkinson C.J."/>
            <person name="Mayor T."/>
            <person name="Mortensen P."/>
            <person name="Nigg E.A."/>
            <person name="Mann M."/>
        </authorList>
    </citation>
    <scope>IDENTIFICATION BY MASS SPECTROMETRY</scope>
    <source>
        <tissue>Lymphoblast</tissue>
    </source>
</reference>
<reference key="10">
    <citation type="journal article" date="2008" name="J. Proteome Res.">
        <title>Phosphoproteome of resting human platelets.</title>
        <authorList>
            <person name="Zahedi R.P."/>
            <person name="Lewandrowski U."/>
            <person name="Wiesner J."/>
            <person name="Wortelkamp S."/>
            <person name="Moebius J."/>
            <person name="Schuetz C."/>
            <person name="Walter U."/>
            <person name="Gambaryan S."/>
            <person name="Sickmann A."/>
        </authorList>
    </citation>
    <scope>IDENTIFICATION BY MASS SPECTROMETRY [LARGE SCALE ANALYSIS]</scope>
    <source>
        <tissue>Platelet</tissue>
    </source>
</reference>
<reference key="11">
    <citation type="journal article" date="2008" name="Proc. Natl. Acad. Sci. U.S.A.">
        <title>A quantitative atlas of mitotic phosphorylation.</title>
        <authorList>
            <person name="Dephoure N."/>
            <person name="Zhou C."/>
            <person name="Villen J."/>
            <person name="Beausoleil S.A."/>
            <person name="Bakalarski C.E."/>
            <person name="Elledge S.J."/>
            <person name="Gygi S.P."/>
        </authorList>
    </citation>
    <scope>PHOSPHORYLATION [LARGE SCALE ANALYSIS] AT SER-1829</scope>
    <scope>IDENTIFICATION BY MASS SPECTROMETRY [LARGE SCALE ANALYSIS]</scope>
    <source>
        <tissue>Cervix carcinoma</tissue>
    </source>
</reference>
<reference key="12">
    <citation type="journal article" date="2009" name="Sci. Signal.">
        <title>Quantitative phosphoproteomic analysis of T cell receptor signaling reveals system-wide modulation of protein-protein interactions.</title>
        <authorList>
            <person name="Mayya V."/>
            <person name="Lundgren D.H."/>
            <person name="Hwang S.-I."/>
            <person name="Rezaul K."/>
            <person name="Wu L."/>
            <person name="Eng J.K."/>
            <person name="Rodionov V."/>
            <person name="Han D.K."/>
        </authorList>
    </citation>
    <scope>IDENTIFICATION BY MASS SPECTROMETRY [LARGE SCALE ANALYSIS]</scope>
    <source>
        <tissue>Leukemic T-cell</tissue>
    </source>
</reference>
<reference key="13">
    <citation type="journal article" date="2013" name="J. Proteome Res.">
        <title>Toward a comprehensive characterization of a human cancer cell phosphoproteome.</title>
        <authorList>
            <person name="Zhou H."/>
            <person name="Di Palma S."/>
            <person name="Preisinger C."/>
            <person name="Peng M."/>
            <person name="Polat A.N."/>
            <person name="Heck A.J."/>
            <person name="Mohammed S."/>
        </authorList>
    </citation>
    <scope>PHOSPHORYLATION [LARGE SCALE ANALYSIS] AT SER-1216; SER-2193; SER-2296; SER-2309 AND SER-2377</scope>
    <scope>IDENTIFICATION BY MASS SPECTROMETRY [LARGE SCALE ANALYSIS]</scope>
    <source>
        <tissue>Erythroleukemia</tissue>
    </source>
</reference>
<reference key="14">
    <citation type="journal article" date="2015" name="J. Med. Genet.">
        <title>A novel syndrome of Klippel-Feil anomaly, myopathy, and characteristic facies is linked to a null mutation in MYO18B.</title>
        <authorList>
            <person name="Alazami A.M."/>
            <person name="Kentab A.Y."/>
            <person name="Faqeih E."/>
            <person name="Mohamed J.Y."/>
            <person name="Alkhalidi H."/>
            <person name="Hijazi H."/>
            <person name="Alkuraya F.S."/>
        </authorList>
    </citation>
    <scope>INVOLVEMENT IN KFS4</scope>
</reference>
<organism>
    <name type="scientific">Homo sapiens</name>
    <name type="common">Human</name>
    <dbReference type="NCBI Taxonomy" id="9606"/>
    <lineage>
        <taxon>Eukaryota</taxon>
        <taxon>Metazoa</taxon>
        <taxon>Chordata</taxon>
        <taxon>Craniata</taxon>
        <taxon>Vertebrata</taxon>
        <taxon>Euteleostomi</taxon>
        <taxon>Mammalia</taxon>
        <taxon>Eutheria</taxon>
        <taxon>Euarchontoglires</taxon>
        <taxon>Primates</taxon>
        <taxon>Haplorrhini</taxon>
        <taxon>Catarrhini</taxon>
        <taxon>Hominidae</taxon>
        <taxon>Homo</taxon>
    </lineage>
</organism>
<name>MY18B_HUMAN</name>